<proteinExistence type="inferred from homology"/>
<keyword id="KW-0150">Chloroplast</keyword>
<keyword id="KW-0240">DNA-directed RNA polymerase</keyword>
<keyword id="KW-0548">Nucleotidyltransferase</keyword>
<keyword id="KW-0934">Plastid</keyword>
<keyword id="KW-0804">Transcription</keyword>
<keyword id="KW-0808">Transferase</keyword>
<feature type="chain" id="PRO_0000296885" description="DNA-directed RNA polymerase subunit alpha">
    <location>
        <begin position="1"/>
        <end position="341"/>
    </location>
</feature>
<feature type="region of interest" description="Alpha N-terminal domain (alpha-NTD)" evidence="1">
    <location>
        <begin position="1"/>
        <end position="233"/>
    </location>
</feature>
<feature type="region of interest" description="Alpha C-terminal domain (alpha-CTD)" evidence="1">
    <location>
        <begin position="262"/>
        <end position="341"/>
    </location>
</feature>
<sequence length="341" mass="38964">MIQDEVPVSAQTIQWRCIESKIESKRLHYGRFAISPFRKGQANTVGIAIRRSLLGEIEGTAITYAKSKNVIHEYSTIIGIEESINDILINFKEIVLRSDSYETQKAYISITGPKDITAEDILLPPSVQAIDDSQHIATITKDITLDIEIEIQKDRGYRIQDSKESQAGEFFIDAVFMPIRKANYSVHSFGNNKKFQEILFIEIWTDGSLTPKEALYEASRNLIDLFLPFLHTEEEEIISDRDEKSESNGNILLSNSISTDIDRMAKEVAFKHIFIDQLELPARAYNCLKKVDVHTISDLLKYSQDDLRKIKNFGKKSVDQVLEALQERFAINLPRNKFSID</sequence>
<accession>A2T365</accession>
<gene>
    <name evidence="1" type="primary">rpoA</name>
</gene>
<comment type="function">
    <text evidence="1">DNA-dependent RNA polymerase catalyzes the transcription of DNA into RNA using the four ribonucleoside triphosphates as substrates.</text>
</comment>
<comment type="catalytic activity">
    <reaction evidence="1">
        <text>RNA(n) + a ribonucleoside 5'-triphosphate = RNA(n+1) + diphosphate</text>
        <dbReference type="Rhea" id="RHEA:21248"/>
        <dbReference type="Rhea" id="RHEA-COMP:14527"/>
        <dbReference type="Rhea" id="RHEA-COMP:17342"/>
        <dbReference type="ChEBI" id="CHEBI:33019"/>
        <dbReference type="ChEBI" id="CHEBI:61557"/>
        <dbReference type="ChEBI" id="CHEBI:140395"/>
        <dbReference type="EC" id="2.7.7.6"/>
    </reaction>
</comment>
<comment type="subunit">
    <text evidence="1">In plastids the minimal PEP RNA polymerase catalytic core is composed of four subunits: alpha, beta, beta', and beta''. When a (nuclear-encoded) sigma factor is associated with the core the holoenzyme is formed, which can initiate transcription.</text>
</comment>
<comment type="subcellular location">
    <subcellularLocation>
        <location>Plastid</location>
        <location>Chloroplast</location>
    </subcellularLocation>
</comment>
<comment type="domain">
    <text evidence="1">The N-terminal domain is essential for RNAP assembly and basal transcription, whereas the C-terminal domain is involved in interaction with transcriptional regulators and with upstream promoter elements.</text>
</comment>
<comment type="similarity">
    <text evidence="1">Belongs to the RNA polymerase alpha chain family.</text>
</comment>
<dbReference type="EC" id="2.7.7.6" evidence="1"/>
<dbReference type="EMBL" id="DQ821119">
    <property type="protein sequence ID" value="ABG79632.1"/>
    <property type="molecule type" value="Genomic_DNA"/>
</dbReference>
<dbReference type="RefSeq" id="YP_001023733.1">
    <property type="nucleotide sequence ID" value="NC_008829.1"/>
</dbReference>
<dbReference type="SMR" id="A2T365"/>
<dbReference type="GeneID" id="4788167"/>
<dbReference type="GO" id="GO:0009507">
    <property type="term" value="C:chloroplast"/>
    <property type="evidence" value="ECO:0007669"/>
    <property type="project" value="UniProtKB-SubCell"/>
</dbReference>
<dbReference type="GO" id="GO:0000428">
    <property type="term" value="C:DNA-directed RNA polymerase complex"/>
    <property type="evidence" value="ECO:0007669"/>
    <property type="project" value="UniProtKB-KW"/>
</dbReference>
<dbReference type="GO" id="GO:0005739">
    <property type="term" value="C:mitochondrion"/>
    <property type="evidence" value="ECO:0007669"/>
    <property type="project" value="GOC"/>
</dbReference>
<dbReference type="GO" id="GO:0003677">
    <property type="term" value="F:DNA binding"/>
    <property type="evidence" value="ECO:0007669"/>
    <property type="project" value="UniProtKB-UniRule"/>
</dbReference>
<dbReference type="GO" id="GO:0003899">
    <property type="term" value="F:DNA-directed RNA polymerase activity"/>
    <property type="evidence" value="ECO:0007669"/>
    <property type="project" value="UniProtKB-UniRule"/>
</dbReference>
<dbReference type="GO" id="GO:0046983">
    <property type="term" value="F:protein dimerization activity"/>
    <property type="evidence" value="ECO:0007669"/>
    <property type="project" value="InterPro"/>
</dbReference>
<dbReference type="GO" id="GO:0006351">
    <property type="term" value="P:DNA-templated transcription"/>
    <property type="evidence" value="ECO:0007669"/>
    <property type="project" value="UniProtKB-UniRule"/>
</dbReference>
<dbReference type="CDD" id="cd06928">
    <property type="entry name" value="RNAP_alpha_NTD"/>
    <property type="match status" value="1"/>
</dbReference>
<dbReference type="FunFam" id="2.170.120.12:FF:000001">
    <property type="entry name" value="DNA-directed RNA polymerase subunit alpha"/>
    <property type="match status" value="1"/>
</dbReference>
<dbReference type="Gene3D" id="1.10.150.20">
    <property type="entry name" value="5' to 3' exonuclease, C-terminal subdomain"/>
    <property type="match status" value="1"/>
</dbReference>
<dbReference type="Gene3D" id="2.170.120.12">
    <property type="entry name" value="DNA-directed RNA polymerase, insert domain"/>
    <property type="match status" value="1"/>
</dbReference>
<dbReference type="Gene3D" id="3.30.1360.10">
    <property type="entry name" value="RNA polymerase, RBP11-like subunit"/>
    <property type="match status" value="1"/>
</dbReference>
<dbReference type="HAMAP" id="MF_00059">
    <property type="entry name" value="RNApol_bact_RpoA"/>
    <property type="match status" value="1"/>
</dbReference>
<dbReference type="InterPro" id="IPR011262">
    <property type="entry name" value="DNA-dir_RNA_pol_insert"/>
</dbReference>
<dbReference type="InterPro" id="IPR011263">
    <property type="entry name" value="DNA-dir_RNA_pol_RpoA/D/Rpb3"/>
</dbReference>
<dbReference type="InterPro" id="IPR011773">
    <property type="entry name" value="DNA-dir_RpoA"/>
</dbReference>
<dbReference type="InterPro" id="IPR036603">
    <property type="entry name" value="RBP11-like"/>
</dbReference>
<dbReference type="InterPro" id="IPR011260">
    <property type="entry name" value="RNAP_asu_C"/>
</dbReference>
<dbReference type="InterPro" id="IPR036643">
    <property type="entry name" value="RNApol_insert_sf"/>
</dbReference>
<dbReference type="NCBIfam" id="TIGR02027">
    <property type="entry name" value="rpoA"/>
    <property type="match status" value="1"/>
</dbReference>
<dbReference type="Pfam" id="PF01000">
    <property type="entry name" value="RNA_pol_A_bac"/>
    <property type="match status" value="1"/>
</dbReference>
<dbReference type="Pfam" id="PF03118">
    <property type="entry name" value="RNA_pol_A_CTD"/>
    <property type="match status" value="1"/>
</dbReference>
<dbReference type="Pfam" id="PF01193">
    <property type="entry name" value="RNA_pol_L"/>
    <property type="match status" value="1"/>
</dbReference>
<dbReference type="SMART" id="SM00662">
    <property type="entry name" value="RPOLD"/>
    <property type="match status" value="1"/>
</dbReference>
<dbReference type="SUPFAM" id="SSF47789">
    <property type="entry name" value="C-terminal domain of RNA polymerase alpha subunit"/>
    <property type="match status" value="1"/>
</dbReference>
<dbReference type="SUPFAM" id="SSF56553">
    <property type="entry name" value="Insert subdomain of RNA polymerase alpha subunit"/>
    <property type="match status" value="1"/>
</dbReference>
<dbReference type="SUPFAM" id="SSF55257">
    <property type="entry name" value="RBP11-like subunits of RNA polymerase"/>
    <property type="match status" value="1"/>
</dbReference>
<reference key="1">
    <citation type="journal article" date="2007" name="Am. Fern J.">
        <title>The complete plastid genome sequence of Angiopteris evecta (G. Forst.) Hoffm. (Marattiaceae).</title>
        <authorList>
            <person name="Roper J.M."/>
            <person name="Hansen S.K."/>
            <person name="Wolf P.G."/>
            <person name="Karol K.G."/>
            <person name="Mandoli D.F."/>
            <person name="Everett K.D.E."/>
            <person name="Kuehl J.V."/>
            <person name="Boore J.L."/>
        </authorList>
    </citation>
    <scope>NUCLEOTIDE SEQUENCE [LARGE SCALE GENOMIC DNA]</scope>
</reference>
<geneLocation type="chloroplast"/>
<evidence type="ECO:0000255" key="1">
    <source>
        <dbReference type="HAMAP-Rule" id="MF_00059"/>
    </source>
</evidence>
<protein>
    <recommendedName>
        <fullName evidence="1">DNA-directed RNA polymerase subunit alpha</fullName>
        <shortName evidence="1">PEP</shortName>
        <ecNumber evidence="1">2.7.7.6</ecNumber>
    </recommendedName>
    <alternativeName>
        <fullName evidence="1">Plastid-encoded RNA polymerase subunit alpha</fullName>
        <shortName evidence="1">RNA polymerase subunit alpha</shortName>
    </alternativeName>
</protein>
<organism>
    <name type="scientific">Angiopteris evecta</name>
    <name type="common">Mule's foot fern</name>
    <name type="synonym">Polypodium evectum</name>
    <dbReference type="NCBI Taxonomy" id="13825"/>
    <lineage>
        <taxon>Eukaryota</taxon>
        <taxon>Viridiplantae</taxon>
        <taxon>Streptophyta</taxon>
        <taxon>Embryophyta</taxon>
        <taxon>Tracheophyta</taxon>
        <taxon>Polypodiopsida</taxon>
        <taxon>Marattiidae</taxon>
        <taxon>Marattiales</taxon>
        <taxon>Marattiaceae</taxon>
        <taxon>Angiopteris</taxon>
    </lineage>
</organism>
<name>RPOA_ANGEV</name>